<gene>
    <name evidence="1" type="primary">hemC</name>
    <name type="ordered locus">COSY_0712</name>
</gene>
<reference key="1">
    <citation type="journal article" date="2007" name="Curr. Biol.">
        <title>Reduced genome of the thioautotrophic intracellular symbiont in a deep-sea clam, Calyptogena okutanii.</title>
        <authorList>
            <person name="Kuwahara H."/>
            <person name="Yoshida T."/>
            <person name="Takaki Y."/>
            <person name="Shimamura S."/>
            <person name="Nishi S."/>
            <person name="Harada M."/>
            <person name="Matsuyama K."/>
            <person name="Takishita K."/>
            <person name="Kawato M."/>
            <person name="Uematsu K."/>
            <person name="Fujiwara Y."/>
            <person name="Sato T."/>
            <person name="Kato C."/>
            <person name="Kitagawa M."/>
            <person name="Kato I."/>
            <person name="Maruyama T."/>
        </authorList>
    </citation>
    <scope>NUCLEOTIDE SEQUENCE [LARGE SCALE GENOMIC DNA]</scope>
    <source>
        <strain>HA</strain>
    </source>
</reference>
<protein>
    <recommendedName>
        <fullName evidence="1">Porphobilinogen deaminase</fullName>
        <shortName evidence="1">PBG</shortName>
        <ecNumber evidence="1">2.5.1.61</ecNumber>
    </recommendedName>
    <alternativeName>
        <fullName evidence="1">Hydroxymethylbilane synthase</fullName>
        <shortName evidence="1">HMBS</shortName>
    </alternativeName>
    <alternativeName>
        <fullName evidence="1">Pre-uroporphyrinogen synthase</fullName>
    </alternativeName>
</protein>
<organism>
    <name type="scientific">Vesicomyosocius okutanii subsp. Calyptogena okutanii (strain HA)</name>
    <dbReference type="NCBI Taxonomy" id="412965"/>
    <lineage>
        <taxon>Bacteria</taxon>
        <taxon>Pseudomonadati</taxon>
        <taxon>Pseudomonadota</taxon>
        <taxon>Gammaproteobacteria</taxon>
        <taxon>Candidatus Pseudothioglobaceae</taxon>
        <taxon>Candidatus Vesicomyosocius</taxon>
    </lineage>
</organism>
<proteinExistence type="inferred from homology"/>
<name>HEM3_VESOH</name>
<feature type="chain" id="PRO_1000190294" description="Porphobilinogen deaminase">
    <location>
        <begin position="1"/>
        <end position="304"/>
    </location>
</feature>
<feature type="modified residue" description="S-(dipyrrolylmethanemethyl)cysteine" evidence="1">
    <location>
        <position position="241"/>
    </location>
</feature>
<dbReference type="EC" id="2.5.1.61" evidence="1"/>
<dbReference type="EMBL" id="AP009247">
    <property type="protein sequence ID" value="BAF61824.1"/>
    <property type="molecule type" value="Genomic_DNA"/>
</dbReference>
<dbReference type="RefSeq" id="WP_011930094.1">
    <property type="nucleotide sequence ID" value="NC_009465.1"/>
</dbReference>
<dbReference type="SMR" id="A5CW34"/>
<dbReference type="STRING" id="412965.COSY_0712"/>
<dbReference type="KEGG" id="vok:COSY_0712"/>
<dbReference type="eggNOG" id="COG0181">
    <property type="taxonomic scope" value="Bacteria"/>
</dbReference>
<dbReference type="HOGENOM" id="CLU_019704_0_2_6"/>
<dbReference type="OrthoDB" id="9810298at2"/>
<dbReference type="UniPathway" id="UPA00251">
    <property type="reaction ID" value="UER00319"/>
</dbReference>
<dbReference type="Proteomes" id="UP000000247">
    <property type="component" value="Chromosome"/>
</dbReference>
<dbReference type="GO" id="GO:0005737">
    <property type="term" value="C:cytoplasm"/>
    <property type="evidence" value="ECO:0007669"/>
    <property type="project" value="TreeGrafter"/>
</dbReference>
<dbReference type="GO" id="GO:0004418">
    <property type="term" value="F:hydroxymethylbilane synthase activity"/>
    <property type="evidence" value="ECO:0007669"/>
    <property type="project" value="UniProtKB-UniRule"/>
</dbReference>
<dbReference type="GO" id="GO:0006782">
    <property type="term" value="P:protoporphyrinogen IX biosynthetic process"/>
    <property type="evidence" value="ECO:0007669"/>
    <property type="project" value="UniProtKB-UniRule"/>
</dbReference>
<dbReference type="CDD" id="cd13646">
    <property type="entry name" value="PBP2_EcHMBS_like"/>
    <property type="match status" value="1"/>
</dbReference>
<dbReference type="FunFam" id="3.40.190.10:FF:000004">
    <property type="entry name" value="Porphobilinogen deaminase"/>
    <property type="match status" value="1"/>
</dbReference>
<dbReference type="FunFam" id="3.40.190.10:FF:000005">
    <property type="entry name" value="Porphobilinogen deaminase"/>
    <property type="match status" value="1"/>
</dbReference>
<dbReference type="Gene3D" id="3.40.190.10">
    <property type="entry name" value="Periplasmic binding protein-like II"/>
    <property type="match status" value="2"/>
</dbReference>
<dbReference type="Gene3D" id="3.30.160.40">
    <property type="entry name" value="Porphobilinogen deaminase, C-terminal domain"/>
    <property type="match status" value="1"/>
</dbReference>
<dbReference type="HAMAP" id="MF_00260">
    <property type="entry name" value="Porphobil_deam"/>
    <property type="match status" value="1"/>
</dbReference>
<dbReference type="InterPro" id="IPR000860">
    <property type="entry name" value="HemC"/>
</dbReference>
<dbReference type="InterPro" id="IPR022419">
    <property type="entry name" value="Porphobilin_deaminase_cofac_BS"/>
</dbReference>
<dbReference type="InterPro" id="IPR022417">
    <property type="entry name" value="Porphobilin_deaminase_N"/>
</dbReference>
<dbReference type="InterPro" id="IPR022418">
    <property type="entry name" value="Porphobilinogen_deaminase_C"/>
</dbReference>
<dbReference type="InterPro" id="IPR036803">
    <property type="entry name" value="Porphobilinogen_deaminase_C_sf"/>
</dbReference>
<dbReference type="NCBIfam" id="TIGR00212">
    <property type="entry name" value="hemC"/>
    <property type="match status" value="1"/>
</dbReference>
<dbReference type="PANTHER" id="PTHR11557">
    <property type="entry name" value="PORPHOBILINOGEN DEAMINASE"/>
    <property type="match status" value="1"/>
</dbReference>
<dbReference type="PANTHER" id="PTHR11557:SF0">
    <property type="entry name" value="PORPHOBILINOGEN DEAMINASE"/>
    <property type="match status" value="1"/>
</dbReference>
<dbReference type="Pfam" id="PF01379">
    <property type="entry name" value="Porphobil_deam"/>
    <property type="match status" value="1"/>
</dbReference>
<dbReference type="Pfam" id="PF03900">
    <property type="entry name" value="Porphobil_deamC"/>
    <property type="match status" value="1"/>
</dbReference>
<dbReference type="PIRSF" id="PIRSF001438">
    <property type="entry name" value="4pyrrol_synth_OHMeBilane_synth"/>
    <property type="match status" value="1"/>
</dbReference>
<dbReference type="PRINTS" id="PR00151">
    <property type="entry name" value="PORPHBDMNASE"/>
</dbReference>
<dbReference type="SUPFAM" id="SSF53850">
    <property type="entry name" value="Periplasmic binding protein-like II"/>
    <property type="match status" value="1"/>
</dbReference>
<dbReference type="SUPFAM" id="SSF54782">
    <property type="entry name" value="Porphobilinogen deaminase (hydroxymethylbilane synthase), C-terminal domain"/>
    <property type="match status" value="1"/>
</dbReference>
<dbReference type="PROSITE" id="PS00533">
    <property type="entry name" value="PORPHOBILINOGEN_DEAM"/>
    <property type="match status" value="1"/>
</dbReference>
<sequence length="304" mass="33483">MNKTLKIATRQSPLALWQAQHVKSRLEKIYPNLTVILVKITTKGDQILNSSLSKIGGKGLFIKELEISIMKGMSDIAVHSMKDVPYEIPQEFELGAILKCENPFDAFVSNHFSSIDDLPKNAKVGTCSMRRILQLKVIRPDLQIIDLRGNVNTRLKKLDDGEFDAIILACAGLIRLGFGNRIKQQIPENQNLPAVGQGAIGIEIRENDKEILDLIKPLIDIETSYRIIAERAMNTQLEGGCSVPVAGFATINNKQITLTGLVGNIDTGVILKEKIFGHVSQAEILGIELANKLILLGAKDILKD</sequence>
<keyword id="KW-0627">Porphyrin biosynthesis</keyword>
<keyword id="KW-1185">Reference proteome</keyword>
<keyword id="KW-0808">Transferase</keyword>
<accession>A5CW34</accession>
<comment type="function">
    <text evidence="1">Tetrapolymerization of the monopyrrole PBG into the hydroxymethylbilane pre-uroporphyrinogen in several discrete steps.</text>
</comment>
<comment type="catalytic activity">
    <reaction evidence="1">
        <text>4 porphobilinogen + H2O = hydroxymethylbilane + 4 NH4(+)</text>
        <dbReference type="Rhea" id="RHEA:13185"/>
        <dbReference type="ChEBI" id="CHEBI:15377"/>
        <dbReference type="ChEBI" id="CHEBI:28938"/>
        <dbReference type="ChEBI" id="CHEBI:57845"/>
        <dbReference type="ChEBI" id="CHEBI:58126"/>
        <dbReference type="EC" id="2.5.1.61"/>
    </reaction>
</comment>
<comment type="cofactor">
    <cofactor evidence="1">
        <name>dipyrromethane</name>
        <dbReference type="ChEBI" id="CHEBI:60342"/>
    </cofactor>
    <text evidence="1">Binds 1 dipyrromethane group covalently.</text>
</comment>
<comment type="pathway">
    <text evidence="1">Porphyrin-containing compound metabolism; protoporphyrin-IX biosynthesis; coproporphyrinogen-III from 5-aminolevulinate: step 2/4.</text>
</comment>
<comment type="subunit">
    <text evidence="1">Monomer.</text>
</comment>
<comment type="miscellaneous">
    <text evidence="1">The porphobilinogen subunits are added to the dipyrromethane group.</text>
</comment>
<comment type="similarity">
    <text evidence="1">Belongs to the HMBS family.</text>
</comment>
<evidence type="ECO:0000255" key="1">
    <source>
        <dbReference type="HAMAP-Rule" id="MF_00260"/>
    </source>
</evidence>